<reference key="1">
    <citation type="journal article" date="2008" name="J. Bacteriol.">
        <title>Complete genome sequence of uropathogenic Proteus mirabilis, a master of both adherence and motility.</title>
        <authorList>
            <person name="Pearson M.M."/>
            <person name="Sebaihia M."/>
            <person name="Churcher C."/>
            <person name="Quail M.A."/>
            <person name="Seshasayee A.S."/>
            <person name="Luscombe N.M."/>
            <person name="Abdellah Z."/>
            <person name="Arrosmith C."/>
            <person name="Atkin B."/>
            <person name="Chillingworth T."/>
            <person name="Hauser H."/>
            <person name="Jagels K."/>
            <person name="Moule S."/>
            <person name="Mungall K."/>
            <person name="Norbertczak H."/>
            <person name="Rabbinowitsch E."/>
            <person name="Walker D."/>
            <person name="Whithead S."/>
            <person name="Thomson N.R."/>
            <person name="Rather P.N."/>
            <person name="Parkhill J."/>
            <person name="Mobley H.L.T."/>
        </authorList>
    </citation>
    <scope>NUCLEOTIDE SEQUENCE [LARGE SCALE GENOMIC DNA]</scope>
    <source>
        <strain>HI4320</strain>
    </source>
</reference>
<dbReference type="EC" id="2.3.2.6" evidence="1"/>
<dbReference type="EMBL" id="AM942759">
    <property type="protein sequence ID" value="CAR41621.1"/>
    <property type="molecule type" value="Genomic_DNA"/>
</dbReference>
<dbReference type="RefSeq" id="WP_012367702.1">
    <property type="nucleotide sequence ID" value="NC_010554.1"/>
</dbReference>
<dbReference type="SMR" id="B4EV85"/>
<dbReference type="EnsemblBacteria" id="CAR41621">
    <property type="protein sequence ID" value="CAR41621"/>
    <property type="gene ID" value="PMI0692"/>
</dbReference>
<dbReference type="GeneID" id="6800036"/>
<dbReference type="KEGG" id="pmr:PMI0692"/>
<dbReference type="eggNOG" id="COG2360">
    <property type="taxonomic scope" value="Bacteria"/>
</dbReference>
<dbReference type="HOGENOM" id="CLU_075045_0_0_6"/>
<dbReference type="Proteomes" id="UP000008319">
    <property type="component" value="Chromosome"/>
</dbReference>
<dbReference type="GO" id="GO:0005737">
    <property type="term" value="C:cytoplasm"/>
    <property type="evidence" value="ECO:0007669"/>
    <property type="project" value="UniProtKB-SubCell"/>
</dbReference>
<dbReference type="GO" id="GO:0008914">
    <property type="term" value="F:leucyl-tRNA--protein transferase activity"/>
    <property type="evidence" value="ECO:0007669"/>
    <property type="project" value="UniProtKB-UniRule"/>
</dbReference>
<dbReference type="GO" id="GO:0030163">
    <property type="term" value="P:protein catabolic process"/>
    <property type="evidence" value="ECO:0007669"/>
    <property type="project" value="UniProtKB-UniRule"/>
</dbReference>
<dbReference type="FunFam" id="3.30.70.3550:FF:000001">
    <property type="entry name" value="Leucyl/phenylalanyl-tRNA--protein transferase"/>
    <property type="match status" value="1"/>
</dbReference>
<dbReference type="FunFam" id="3.40.630.70:FF:000001">
    <property type="entry name" value="Leucyl/phenylalanyl-tRNA--protein transferase"/>
    <property type="match status" value="1"/>
</dbReference>
<dbReference type="Gene3D" id="3.40.630.70">
    <property type="entry name" value="Leucyl/phenylalanyl-tRNA-protein transferase, C-terminal domain"/>
    <property type="match status" value="1"/>
</dbReference>
<dbReference type="Gene3D" id="3.30.70.3550">
    <property type="entry name" value="Leucyl/phenylalanyl-tRNA-protein transferase, N-terminal domain"/>
    <property type="match status" value="1"/>
</dbReference>
<dbReference type="HAMAP" id="MF_00688">
    <property type="entry name" value="Leu_Phe_trans"/>
    <property type="match status" value="1"/>
</dbReference>
<dbReference type="InterPro" id="IPR016181">
    <property type="entry name" value="Acyl_CoA_acyltransferase"/>
</dbReference>
<dbReference type="InterPro" id="IPR004616">
    <property type="entry name" value="Leu/Phe-tRNA_Trfase"/>
</dbReference>
<dbReference type="InterPro" id="IPR042203">
    <property type="entry name" value="Leu/Phe-tRNA_Trfase_C"/>
</dbReference>
<dbReference type="InterPro" id="IPR042221">
    <property type="entry name" value="Leu/Phe-tRNA_Trfase_N"/>
</dbReference>
<dbReference type="NCBIfam" id="TIGR00667">
    <property type="entry name" value="aat"/>
    <property type="match status" value="1"/>
</dbReference>
<dbReference type="PANTHER" id="PTHR30098">
    <property type="entry name" value="LEUCYL/PHENYLALANYL-TRNA--PROTEIN TRANSFERASE"/>
    <property type="match status" value="1"/>
</dbReference>
<dbReference type="PANTHER" id="PTHR30098:SF2">
    <property type="entry name" value="LEUCYL_PHENYLALANYL-TRNA--PROTEIN TRANSFERASE"/>
    <property type="match status" value="1"/>
</dbReference>
<dbReference type="Pfam" id="PF03588">
    <property type="entry name" value="Leu_Phe_trans"/>
    <property type="match status" value="1"/>
</dbReference>
<dbReference type="SUPFAM" id="SSF55729">
    <property type="entry name" value="Acyl-CoA N-acyltransferases (Nat)"/>
    <property type="match status" value="1"/>
</dbReference>
<proteinExistence type="inferred from homology"/>
<keyword id="KW-0012">Acyltransferase</keyword>
<keyword id="KW-0963">Cytoplasm</keyword>
<keyword id="KW-1185">Reference proteome</keyword>
<keyword id="KW-0808">Transferase</keyword>
<sequence>MPLFQLDEHDVTFPAPHLALKEPSGLLAIGGDISPARLKEAYQTGIFPWYTPHETPLWWSPDPRAVLPAGTLHIGRTLRKFLRQAPYTITLNQAFSDVIEACSVRDEGTWIGPDIKTGYRALHQQGEAHSVEVWEGDELIGGLYGVNVGAVFCGESMFSRRNNASKCAFVAFYNHFLRYGGQLFDCQVLNSHTAALGAIEIARDRYLEALSRWKKVIIDKKCWYQQSLEL</sequence>
<protein>
    <recommendedName>
        <fullName evidence="1">Leucyl/phenylalanyl-tRNA--protein transferase</fullName>
        <ecNumber evidence="1">2.3.2.6</ecNumber>
    </recommendedName>
    <alternativeName>
        <fullName evidence="1">L/F-transferase</fullName>
    </alternativeName>
    <alternativeName>
        <fullName evidence="1">Leucyltransferase</fullName>
    </alternativeName>
    <alternativeName>
        <fullName evidence="1">Phenyalanyltransferase</fullName>
    </alternativeName>
</protein>
<feature type="chain" id="PRO_1000131937" description="Leucyl/phenylalanyl-tRNA--protein transferase">
    <location>
        <begin position="1"/>
        <end position="230"/>
    </location>
</feature>
<name>LFTR_PROMH</name>
<organism>
    <name type="scientific">Proteus mirabilis (strain HI4320)</name>
    <dbReference type="NCBI Taxonomy" id="529507"/>
    <lineage>
        <taxon>Bacteria</taxon>
        <taxon>Pseudomonadati</taxon>
        <taxon>Pseudomonadota</taxon>
        <taxon>Gammaproteobacteria</taxon>
        <taxon>Enterobacterales</taxon>
        <taxon>Morganellaceae</taxon>
        <taxon>Proteus</taxon>
    </lineage>
</organism>
<comment type="function">
    <text evidence="1">Functions in the N-end rule pathway of protein degradation where it conjugates Leu, Phe and, less efficiently, Met from aminoacyl-tRNAs to the N-termini of proteins containing an N-terminal arginine or lysine.</text>
</comment>
<comment type="catalytic activity">
    <reaction evidence="1">
        <text>N-terminal L-lysyl-[protein] + L-leucyl-tRNA(Leu) = N-terminal L-leucyl-L-lysyl-[protein] + tRNA(Leu) + H(+)</text>
        <dbReference type="Rhea" id="RHEA:12340"/>
        <dbReference type="Rhea" id="RHEA-COMP:9613"/>
        <dbReference type="Rhea" id="RHEA-COMP:9622"/>
        <dbReference type="Rhea" id="RHEA-COMP:12670"/>
        <dbReference type="Rhea" id="RHEA-COMP:12671"/>
        <dbReference type="ChEBI" id="CHEBI:15378"/>
        <dbReference type="ChEBI" id="CHEBI:65249"/>
        <dbReference type="ChEBI" id="CHEBI:78442"/>
        <dbReference type="ChEBI" id="CHEBI:78494"/>
        <dbReference type="ChEBI" id="CHEBI:133043"/>
        <dbReference type="EC" id="2.3.2.6"/>
    </reaction>
</comment>
<comment type="catalytic activity">
    <reaction evidence="1">
        <text>N-terminal L-arginyl-[protein] + L-leucyl-tRNA(Leu) = N-terminal L-leucyl-L-arginyl-[protein] + tRNA(Leu) + H(+)</text>
        <dbReference type="Rhea" id="RHEA:50416"/>
        <dbReference type="Rhea" id="RHEA-COMP:9613"/>
        <dbReference type="Rhea" id="RHEA-COMP:9622"/>
        <dbReference type="Rhea" id="RHEA-COMP:12672"/>
        <dbReference type="Rhea" id="RHEA-COMP:12673"/>
        <dbReference type="ChEBI" id="CHEBI:15378"/>
        <dbReference type="ChEBI" id="CHEBI:64719"/>
        <dbReference type="ChEBI" id="CHEBI:78442"/>
        <dbReference type="ChEBI" id="CHEBI:78494"/>
        <dbReference type="ChEBI" id="CHEBI:133044"/>
        <dbReference type="EC" id="2.3.2.6"/>
    </reaction>
</comment>
<comment type="catalytic activity">
    <reaction evidence="1">
        <text>L-phenylalanyl-tRNA(Phe) + an N-terminal L-alpha-aminoacyl-[protein] = an N-terminal L-phenylalanyl-L-alpha-aminoacyl-[protein] + tRNA(Phe)</text>
        <dbReference type="Rhea" id="RHEA:43632"/>
        <dbReference type="Rhea" id="RHEA-COMP:9668"/>
        <dbReference type="Rhea" id="RHEA-COMP:9699"/>
        <dbReference type="Rhea" id="RHEA-COMP:10636"/>
        <dbReference type="Rhea" id="RHEA-COMP:10637"/>
        <dbReference type="ChEBI" id="CHEBI:78442"/>
        <dbReference type="ChEBI" id="CHEBI:78531"/>
        <dbReference type="ChEBI" id="CHEBI:78597"/>
        <dbReference type="ChEBI" id="CHEBI:83561"/>
        <dbReference type="EC" id="2.3.2.6"/>
    </reaction>
</comment>
<comment type="subcellular location">
    <subcellularLocation>
        <location evidence="1">Cytoplasm</location>
    </subcellularLocation>
</comment>
<comment type="similarity">
    <text evidence="1">Belongs to the L/F-transferase family.</text>
</comment>
<evidence type="ECO:0000255" key="1">
    <source>
        <dbReference type="HAMAP-Rule" id="MF_00688"/>
    </source>
</evidence>
<accession>B4EV85</accession>
<gene>
    <name evidence="1" type="primary">aat</name>
    <name type="ordered locus">PMI0692</name>
</gene>